<sequence length="91" mass="10598">MVTLVIALYFIGMLMLFINRHFLMMILLSIESMYMSLLLMLCIYFCFFNLLSIFVFLISIVCEAGLALSLLVMMSFFYGNELMMSMNLIKC</sequence>
<reference key="1">
    <citation type="journal article" date="1998" name="Mol. Biol. Evol.">
        <title>Mitochondrial gene order is not conserved in arthropods: prostriate and metastriate tick mitochondrial genomes.</title>
        <authorList>
            <person name="Black W.C. IV"/>
            <person name="Roehrdanz R.L."/>
        </authorList>
    </citation>
    <scope>NUCLEOTIDE SEQUENCE [GENOMIC DNA]</scope>
</reference>
<accession>O99826</accession>
<gene>
    <name type="primary">ND4L</name>
</gene>
<proteinExistence type="inferred from homology"/>
<evidence type="ECO:0000250" key="1"/>
<evidence type="ECO:0000255" key="2"/>
<evidence type="ECO:0000305" key="3"/>
<feature type="chain" id="PRO_0000118484" description="NADH-ubiquinone oxidoreductase chain 4L">
    <location>
        <begin position="1"/>
        <end position="91"/>
    </location>
</feature>
<feature type="transmembrane region" description="Helical" evidence="2">
    <location>
        <begin position="8"/>
        <end position="28"/>
    </location>
</feature>
<feature type="transmembrane region" description="Helical" evidence="2">
    <location>
        <begin position="38"/>
        <end position="58"/>
    </location>
</feature>
<feature type="transmembrane region" description="Helical" evidence="2">
    <location>
        <begin position="59"/>
        <end position="79"/>
    </location>
</feature>
<geneLocation type="mitochondrion"/>
<name>NU4LM_RHISA</name>
<comment type="function">
    <text evidence="1">Core subunit of the mitochondrial membrane respiratory chain NADH dehydrogenase (Complex I) that is believed to belong to the minimal assembly required for catalysis. Complex I functions in the transfer of electrons from NADH to the respiratory chain. The immediate electron acceptor for the enzyme is believed to be ubiquinone (By similarity).</text>
</comment>
<comment type="catalytic activity">
    <reaction>
        <text>a ubiquinone + NADH + 5 H(+)(in) = a ubiquinol + NAD(+) + 4 H(+)(out)</text>
        <dbReference type="Rhea" id="RHEA:29091"/>
        <dbReference type="Rhea" id="RHEA-COMP:9565"/>
        <dbReference type="Rhea" id="RHEA-COMP:9566"/>
        <dbReference type="ChEBI" id="CHEBI:15378"/>
        <dbReference type="ChEBI" id="CHEBI:16389"/>
        <dbReference type="ChEBI" id="CHEBI:17976"/>
        <dbReference type="ChEBI" id="CHEBI:57540"/>
        <dbReference type="ChEBI" id="CHEBI:57945"/>
        <dbReference type="EC" id="7.1.1.2"/>
    </reaction>
</comment>
<comment type="subcellular location">
    <subcellularLocation>
        <location evidence="1">Mitochondrion membrane</location>
        <topology evidence="1">Multi-pass membrane protein</topology>
    </subcellularLocation>
</comment>
<comment type="similarity">
    <text evidence="3">Belongs to the complex I subunit 4L family.</text>
</comment>
<organism>
    <name type="scientific">Rhipicephalus sanguineus</name>
    <name type="common">Brown dog tick</name>
    <name type="synonym">Ixodes sanguineus</name>
    <dbReference type="NCBI Taxonomy" id="34632"/>
    <lineage>
        <taxon>Eukaryota</taxon>
        <taxon>Metazoa</taxon>
        <taxon>Ecdysozoa</taxon>
        <taxon>Arthropoda</taxon>
        <taxon>Chelicerata</taxon>
        <taxon>Arachnida</taxon>
        <taxon>Acari</taxon>
        <taxon>Parasitiformes</taxon>
        <taxon>Ixodida</taxon>
        <taxon>Ixodoidea</taxon>
        <taxon>Ixodidae</taxon>
        <taxon>Rhipicephalinae</taxon>
        <taxon>Rhipicephalus</taxon>
        <taxon>Rhipicephalus</taxon>
    </lineage>
</organism>
<keyword id="KW-0249">Electron transport</keyword>
<keyword id="KW-0472">Membrane</keyword>
<keyword id="KW-0496">Mitochondrion</keyword>
<keyword id="KW-0520">NAD</keyword>
<keyword id="KW-0679">Respiratory chain</keyword>
<keyword id="KW-1278">Translocase</keyword>
<keyword id="KW-0812">Transmembrane</keyword>
<keyword id="KW-1133">Transmembrane helix</keyword>
<keyword id="KW-0813">Transport</keyword>
<keyword id="KW-0830">Ubiquinone</keyword>
<protein>
    <recommendedName>
        <fullName>NADH-ubiquinone oxidoreductase chain 4L</fullName>
        <ecNumber>7.1.1.2</ecNumber>
    </recommendedName>
    <alternativeName>
        <fullName>NADH dehydrogenase subunit 4L</fullName>
    </alternativeName>
</protein>
<dbReference type="EC" id="7.1.1.2"/>
<dbReference type="EMBL" id="AF081829">
    <property type="protein sequence ID" value="AAD05527.1"/>
    <property type="molecule type" value="Genomic_DNA"/>
</dbReference>
<dbReference type="PIR" id="T11163">
    <property type="entry name" value="T11163"/>
</dbReference>
<dbReference type="RefSeq" id="NP_008520.1">
    <property type="nucleotide sequence ID" value="NC_002074.1"/>
</dbReference>
<dbReference type="SMR" id="O99826"/>
<dbReference type="GeneID" id="808363"/>
<dbReference type="KEGG" id="rsan:808363"/>
<dbReference type="CTD" id="4539"/>
<dbReference type="OrthoDB" id="6146597at2759"/>
<dbReference type="GO" id="GO:0031966">
    <property type="term" value="C:mitochondrial membrane"/>
    <property type="evidence" value="ECO:0007669"/>
    <property type="project" value="UniProtKB-SubCell"/>
</dbReference>
<dbReference type="GO" id="GO:0008137">
    <property type="term" value="F:NADH dehydrogenase (ubiquinone) activity"/>
    <property type="evidence" value="ECO:0007669"/>
    <property type="project" value="UniProtKB-EC"/>
</dbReference>
<dbReference type="Gene3D" id="1.10.287.3510">
    <property type="match status" value="1"/>
</dbReference>